<organism>
    <name type="scientific">Salmonella paratyphi A (strain AKU_12601)</name>
    <dbReference type="NCBI Taxonomy" id="554290"/>
    <lineage>
        <taxon>Bacteria</taxon>
        <taxon>Pseudomonadati</taxon>
        <taxon>Pseudomonadota</taxon>
        <taxon>Gammaproteobacteria</taxon>
        <taxon>Enterobacterales</taxon>
        <taxon>Enterobacteriaceae</taxon>
        <taxon>Salmonella</taxon>
    </lineage>
</organism>
<name>YCIU_SALPK</name>
<dbReference type="EMBL" id="FM200053">
    <property type="protein sequence ID" value="CAR59210.1"/>
    <property type="molecule type" value="Genomic_DNA"/>
</dbReference>
<dbReference type="RefSeq" id="WP_000425070.1">
    <property type="nucleotide sequence ID" value="NC_011147.1"/>
</dbReference>
<dbReference type="SMR" id="B5BIA7"/>
<dbReference type="KEGG" id="sek:SSPA1056"/>
<dbReference type="HOGENOM" id="CLU_143392_0_0_6"/>
<dbReference type="Proteomes" id="UP000001869">
    <property type="component" value="Chromosome"/>
</dbReference>
<dbReference type="Gene3D" id="3.10.450.140">
    <property type="entry name" value="dsDNA mimic, putative"/>
    <property type="match status" value="1"/>
</dbReference>
<dbReference type="HAMAP" id="MF_00680">
    <property type="entry name" value="Put_dsDNA_mimic"/>
    <property type="match status" value="1"/>
</dbReference>
<dbReference type="InterPro" id="IPR007376">
    <property type="entry name" value="dsDNA_mimic_put"/>
</dbReference>
<dbReference type="InterPro" id="IPR036763">
    <property type="entry name" value="Put_dsDNA_mimic_sf"/>
</dbReference>
<dbReference type="NCBIfam" id="NF003469">
    <property type="entry name" value="PRK05094.1"/>
    <property type="match status" value="1"/>
</dbReference>
<dbReference type="Pfam" id="PF04269">
    <property type="entry name" value="DUF440"/>
    <property type="match status" value="1"/>
</dbReference>
<dbReference type="PIRSF" id="PIRSF004916">
    <property type="entry name" value="UCP004916"/>
    <property type="match status" value="1"/>
</dbReference>
<dbReference type="SUPFAM" id="SSF102816">
    <property type="entry name" value="Putative dsDNA mimic"/>
    <property type="match status" value="1"/>
</dbReference>
<protein>
    <recommendedName>
        <fullName evidence="1">Putative double-stranded DNA mimic protein YciU</fullName>
    </recommendedName>
</protein>
<proteinExistence type="inferred from homology"/>
<feature type="chain" id="PRO_1000131712" description="Putative double-stranded DNA mimic protein YciU">
    <location>
        <begin position="1"/>
        <end position="109"/>
    </location>
</feature>
<gene>
    <name evidence="1" type="primary">yciU</name>
    <name type="ordered locus">SSPA1056</name>
</gene>
<comment type="function">
    <text evidence="1">May act as a double-stranded DNA (dsDNA) mimic. Probably regulates the activity of a dsDNA-binding protein.</text>
</comment>
<comment type="similarity">
    <text evidence="1">Belongs to the putative dsDNA mimic protein family.</text>
</comment>
<reference key="1">
    <citation type="journal article" date="2009" name="BMC Genomics">
        <title>Pseudogene accumulation in the evolutionary histories of Salmonella enterica serovars Paratyphi A and Typhi.</title>
        <authorList>
            <person name="Holt K.E."/>
            <person name="Thomson N.R."/>
            <person name="Wain J."/>
            <person name="Langridge G.C."/>
            <person name="Hasan R."/>
            <person name="Bhutta Z.A."/>
            <person name="Quail M.A."/>
            <person name="Norbertczak H."/>
            <person name="Walker D."/>
            <person name="Simmonds M."/>
            <person name="White B."/>
            <person name="Bason N."/>
            <person name="Mungall K."/>
            <person name="Dougan G."/>
            <person name="Parkhill J."/>
        </authorList>
    </citation>
    <scope>NUCLEOTIDE SEQUENCE [LARGE SCALE GENOMIC DNA]</scope>
    <source>
        <strain>AKU_12601</strain>
    </source>
</reference>
<evidence type="ECO:0000255" key="1">
    <source>
        <dbReference type="HAMAP-Rule" id="MF_00680"/>
    </source>
</evidence>
<sequence length="109" mass="12729">MEMDLNNRLTEDETLEQAYDIFLELAADNLDPADIILFNLQFEERGGAELFDPAEDWQEHVDFDLNPDFFAEVVIGLADTEDGEINDIFARVLLCREKDHKLCHILWRE</sequence>
<accession>B5BIA7</accession>